<comment type="function">
    <text evidence="1">Required for normal levels of the cell wall 1,6-beta-glucan. Involved in a protein folding machinery chaperoning proteins acting in various physiological processes including cell wall synthesis and lysis of autophagic bodies (By similarity).</text>
</comment>
<comment type="subcellular location">
    <subcellularLocation>
        <location evidence="1">Endoplasmic reticulum membrane</location>
        <topology evidence="1">Single-pass type I membrane protein</topology>
    </subcellularLocation>
</comment>
<comment type="similarity">
    <text evidence="3">Belongs to the ROT1 family.</text>
</comment>
<feature type="signal peptide" evidence="2">
    <location>
        <begin position="1"/>
        <end position="21"/>
    </location>
</feature>
<feature type="chain" id="PRO_0000333416" description="Protein rot1">
    <location>
        <begin position="22"/>
        <end position="232"/>
    </location>
</feature>
<feature type="topological domain" description="Lumenal" evidence="2">
    <location>
        <begin position="22"/>
        <end position="211"/>
    </location>
</feature>
<feature type="transmembrane region" description="Helical" evidence="2">
    <location>
        <begin position="212"/>
        <end position="232"/>
    </location>
</feature>
<feature type="glycosylation site" description="N-linked (GlcNAc...) asparagine" evidence="2">
    <location>
        <position position="83"/>
    </location>
</feature>
<feature type="glycosylation site" description="N-linked (GlcNAc...) asparagine" evidence="2">
    <location>
        <position position="104"/>
    </location>
</feature>
<feature type="glycosylation site" description="N-linked (GlcNAc...) asparagine" evidence="2">
    <location>
        <position position="129"/>
    </location>
</feature>
<evidence type="ECO:0000250" key="1"/>
<evidence type="ECO:0000255" key="2"/>
<evidence type="ECO:0000305" key="3"/>
<gene>
    <name type="primary">rot1</name>
    <name type="ORF">SPAC31G5.02</name>
</gene>
<dbReference type="EMBL" id="CU329670">
    <property type="protein sequence ID" value="CAB11686.1"/>
    <property type="molecule type" value="Genomic_DNA"/>
</dbReference>
<dbReference type="PIR" id="T38619">
    <property type="entry name" value="T38619"/>
</dbReference>
<dbReference type="RefSeq" id="NP_594002.1">
    <property type="nucleotide sequence ID" value="NM_001019428.2"/>
</dbReference>
<dbReference type="BioGRID" id="278119">
    <property type="interactions" value="2"/>
</dbReference>
<dbReference type="FunCoup" id="O14103">
    <property type="interactions" value="79"/>
</dbReference>
<dbReference type="STRING" id="284812.O14103"/>
<dbReference type="GlyCosmos" id="O14103">
    <property type="glycosylation" value="3 sites, No reported glycans"/>
</dbReference>
<dbReference type="iPTMnet" id="O14103"/>
<dbReference type="PaxDb" id="4896-SPAC31G5.02.1"/>
<dbReference type="EnsemblFungi" id="SPAC31G5.02.1">
    <property type="protein sequence ID" value="SPAC31G5.02.1:pep"/>
    <property type="gene ID" value="SPAC31G5.02"/>
</dbReference>
<dbReference type="GeneID" id="2541623"/>
<dbReference type="KEGG" id="spo:2541623"/>
<dbReference type="PomBase" id="SPAC31G5.02">
    <property type="gene designation" value="rot1"/>
</dbReference>
<dbReference type="VEuPathDB" id="FungiDB:SPAC31G5.02"/>
<dbReference type="eggNOG" id="ENOG502QQTG">
    <property type="taxonomic scope" value="Eukaryota"/>
</dbReference>
<dbReference type="HOGENOM" id="CLU_071622_0_0_1"/>
<dbReference type="InParanoid" id="O14103"/>
<dbReference type="OMA" id="YKPPQML"/>
<dbReference type="PhylomeDB" id="O14103"/>
<dbReference type="PRO" id="PR:O14103"/>
<dbReference type="Proteomes" id="UP000002485">
    <property type="component" value="Chromosome I"/>
</dbReference>
<dbReference type="GO" id="GO:0005783">
    <property type="term" value="C:endoplasmic reticulum"/>
    <property type="evidence" value="ECO:0007005"/>
    <property type="project" value="PomBase"/>
</dbReference>
<dbReference type="GO" id="GO:0005789">
    <property type="term" value="C:endoplasmic reticulum membrane"/>
    <property type="evidence" value="ECO:0000318"/>
    <property type="project" value="GO_Central"/>
</dbReference>
<dbReference type="GO" id="GO:0051082">
    <property type="term" value="F:unfolded protein binding"/>
    <property type="evidence" value="ECO:0000318"/>
    <property type="project" value="GO_Central"/>
</dbReference>
<dbReference type="GO" id="GO:0006458">
    <property type="term" value="P:'de novo' protein folding"/>
    <property type="evidence" value="ECO:0000318"/>
    <property type="project" value="GO_Central"/>
</dbReference>
<dbReference type="GO" id="GO:0034975">
    <property type="term" value="P:protein folding in endoplasmic reticulum"/>
    <property type="evidence" value="ECO:0000305"/>
    <property type="project" value="PomBase"/>
</dbReference>
<dbReference type="InterPro" id="IPR019623">
    <property type="entry name" value="Rot1"/>
</dbReference>
<dbReference type="PANTHER" id="PTHR28090">
    <property type="entry name" value="PROTEIN ROT1"/>
    <property type="match status" value="1"/>
</dbReference>
<dbReference type="PANTHER" id="PTHR28090:SF1">
    <property type="entry name" value="PROTEIN ROT1"/>
    <property type="match status" value="1"/>
</dbReference>
<dbReference type="Pfam" id="PF10681">
    <property type="entry name" value="Rot1"/>
    <property type="match status" value="1"/>
</dbReference>
<dbReference type="PIRSF" id="PIRSF017290">
    <property type="entry name" value="ROT1_prd"/>
    <property type="match status" value="1"/>
</dbReference>
<protein>
    <recommendedName>
        <fullName>Protein rot1</fullName>
    </recommendedName>
</protein>
<name>ROT1_SCHPO</name>
<keyword id="KW-0256">Endoplasmic reticulum</keyword>
<keyword id="KW-0325">Glycoprotein</keyword>
<keyword id="KW-0472">Membrane</keyword>
<keyword id="KW-1185">Reference proteome</keyword>
<keyword id="KW-0732">Signal</keyword>
<keyword id="KW-0812">Transmembrane</keyword>
<keyword id="KW-1133">Transmembrane helix</keyword>
<proteinExistence type="inferred from homology"/>
<accession>O14103</accession>
<sequence length="232" mass="26432">MHLLYQIGLFTCLWLTQYVGAEIDNYDENLVGTWSSKSETVLTGPDFFDPLDEDFFEPELPGISYSFTDDGFFEEAIYIIKSNATKPQCPKGFLQWQHGTYAINDTGTLVLTPFVGDGRQLESDPCTSNFSVYTRYDQVETMEKYEISMDRYHGRYKLELYEWDGTPKQPMFLAYRPPKMLPTSTIAVNTIQTAAKRWTAPLVPLAQKHTNTIWWVGLGLIAIGSIGYLVVS</sequence>
<organism>
    <name type="scientific">Schizosaccharomyces pombe (strain 972 / ATCC 24843)</name>
    <name type="common">Fission yeast</name>
    <dbReference type="NCBI Taxonomy" id="284812"/>
    <lineage>
        <taxon>Eukaryota</taxon>
        <taxon>Fungi</taxon>
        <taxon>Dikarya</taxon>
        <taxon>Ascomycota</taxon>
        <taxon>Taphrinomycotina</taxon>
        <taxon>Schizosaccharomycetes</taxon>
        <taxon>Schizosaccharomycetales</taxon>
        <taxon>Schizosaccharomycetaceae</taxon>
        <taxon>Schizosaccharomyces</taxon>
    </lineage>
</organism>
<reference key="1">
    <citation type="journal article" date="2002" name="Nature">
        <title>The genome sequence of Schizosaccharomyces pombe.</title>
        <authorList>
            <person name="Wood V."/>
            <person name="Gwilliam R."/>
            <person name="Rajandream M.A."/>
            <person name="Lyne M.H."/>
            <person name="Lyne R."/>
            <person name="Stewart A."/>
            <person name="Sgouros J.G."/>
            <person name="Peat N."/>
            <person name="Hayles J."/>
            <person name="Baker S.G."/>
            <person name="Basham D."/>
            <person name="Bowman S."/>
            <person name="Brooks K."/>
            <person name="Brown D."/>
            <person name="Brown S."/>
            <person name="Chillingworth T."/>
            <person name="Churcher C.M."/>
            <person name="Collins M."/>
            <person name="Connor R."/>
            <person name="Cronin A."/>
            <person name="Davis P."/>
            <person name="Feltwell T."/>
            <person name="Fraser A."/>
            <person name="Gentles S."/>
            <person name="Goble A."/>
            <person name="Hamlin N."/>
            <person name="Harris D.E."/>
            <person name="Hidalgo J."/>
            <person name="Hodgson G."/>
            <person name="Holroyd S."/>
            <person name="Hornsby T."/>
            <person name="Howarth S."/>
            <person name="Huckle E.J."/>
            <person name="Hunt S."/>
            <person name="Jagels K."/>
            <person name="James K.D."/>
            <person name="Jones L."/>
            <person name="Jones M."/>
            <person name="Leather S."/>
            <person name="McDonald S."/>
            <person name="McLean J."/>
            <person name="Mooney P."/>
            <person name="Moule S."/>
            <person name="Mungall K.L."/>
            <person name="Murphy L.D."/>
            <person name="Niblett D."/>
            <person name="Odell C."/>
            <person name="Oliver K."/>
            <person name="O'Neil S."/>
            <person name="Pearson D."/>
            <person name="Quail M.A."/>
            <person name="Rabbinowitsch E."/>
            <person name="Rutherford K.M."/>
            <person name="Rutter S."/>
            <person name="Saunders D."/>
            <person name="Seeger K."/>
            <person name="Sharp S."/>
            <person name="Skelton J."/>
            <person name="Simmonds M.N."/>
            <person name="Squares R."/>
            <person name="Squares S."/>
            <person name="Stevens K."/>
            <person name="Taylor K."/>
            <person name="Taylor R.G."/>
            <person name="Tivey A."/>
            <person name="Walsh S.V."/>
            <person name="Warren T."/>
            <person name="Whitehead S."/>
            <person name="Woodward J.R."/>
            <person name="Volckaert G."/>
            <person name="Aert R."/>
            <person name="Robben J."/>
            <person name="Grymonprez B."/>
            <person name="Weltjens I."/>
            <person name="Vanstreels E."/>
            <person name="Rieger M."/>
            <person name="Schaefer M."/>
            <person name="Mueller-Auer S."/>
            <person name="Gabel C."/>
            <person name="Fuchs M."/>
            <person name="Duesterhoeft A."/>
            <person name="Fritzc C."/>
            <person name="Holzer E."/>
            <person name="Moestl D."/>
            <person name="Hilbert H."/>
            <person name="Borzym K."/>
            <person name="Langer I."/>
            <person name="Beck A."/>
            <person name="Lehrach H."/>
            <person name="Reinhardt R."/>
            <person name="Pohl T.M."/>
            <person name="Eger P."/>
            <person name="Zimmermann W."/>
            <person name="Wedler H."/>
            <person name="Wambutt R."/>
            <person name="Purnelle B."/>
            <person name="Goffeau A."/>
            <person name="Cadieu E."/>
            <person name="Dreano S."/>
            <person name="Gloux S."/>
            <person name="Lelaure V."/>
            <person name="Mottier S."/>
            <person name="Galibert F."/>
            <person name="Aves S.J."/>
            <person name="Xiang Z."/>
            <person name="Hunt C."/>
            <person name="Moore K."/>
            <person name="Hurst S.M."/>
            <person name="Lucas M."/>
            <person name="Rochet M."/>
            <person name="Gaillardin C."/>
            <person name="Tallada V.A."/>
            <person name="Garzon A."/>
            <person name="Thode G."/>
            <person name="Daga R.R."/>
            <person name="Cruzado L."/>
            <person name="Jimenez J."/>
            <person name="Sanchez M."/>
            <person name="del Rey F."/>
            <person name="Benito J."/>
            <person name="Dominguez A."/>
            <person name="Revuelta J.L."/>
            <person name="Moreno S."/>
            <person name="Armstrong J."/>
            <person name="Forsburg S.L."/>
            <person name="Cerutti L."/>
            <person name="Lowe T."/>
            <person name="McCombie W.R."/>
            <person name="Paulsen I."/>
            <person name="Potashkin J."/>
            <person name="Shpakovski G.V."/>
            <person name="Ussery D."/>
            <person name="Barrell B.G."/>
            <person name="Nurse P."/>
        </authorList>
    </citation>
    <scope>NUCLEOTIDE SEQUENCE [LARGE SCALE GENOMIC DNA]</scope>
    <source>
        <strain>972 / ATCC 24843</strain>
    </source>
</reference>